<organism>
    <name type="scientific">Rhodopseudomonas palustris (strain ATCC BAA-98 / CGA009)</name>
    <dbReference type="NCBI Taxonomy" id="258594"/>
    <lineage>
        <taxon>Bacteria</taxon>
        <taxon>Pseudomonadati</taxon>
        <taxon>Pseudomonadota</taxon>
        <taxon>Alphaproteobacteria</taxon>
        <taxon>Hyphomicrobiales</taxon>
        <taxon>Nitrobacteraceae</taxon>
        <taxon>Rhodopseudomonas</taxon>
    </lineage>
</organism>
<gene>
    <name evidence="1" type="primary">lipB</name>
    <name type="ordered locus">RPA3169</name>
</gene>
<reference key="1">
    <citation type="journal article" date="2004" name="Nat. Biotechnol.">
        <title>Complete genome sequence of the metabolically versatile photosynthetic bacterium Rhodopseudomonas palustris.</title>
        <authorList>
            <person name="Larimer F.W."/>
            <person name="Chain P."/>
            <person name="Hauser L."/>
            <person name="Lamerdin J.E."/>
            <person name="Malfatti S."/>
            <person name="Do L."/>
            <person name="Land M.L."/>
            <person name="Pelletier D.A."/>
            <person name="Beatty J.T."/>
            <person name="Lang A.S."/>
            <person name="Tabita F.R."/>
            <person name="Gibson J.L."/>
            <person name="Hanson T.E."/>
            <person name="Bobst C."/>
            <person name="Torres y Torres J.L."/>
            <person name="Peres C."/>
            <person name="Harrison F.H."/>
            <person name="Gibson J."/>
            <person name="Harwood C.S."/>
        </authorList>
    </citation>
    <scope>NUCLEOTIDE SEQUENCE [LARGE SCALE GENOMIC DNA]</scope>
    <source>
        <strain>ATCC BAA-98 / CGA009</strain>
    </source>
</reference>
<comment type="function">
    <text evidence="1">Catalyzes the transfer of endogenously produced octanoic acid from octanoyl-acyl-carrier-protein onto the lipoyl domains of lipoate-dependent enzymes. Lipoyl-ACP can also act as a substrate although octanoyl-ACP is likely to be the physiological substrate.</text>
</comment>
<comment type="catalytic activity">
    <reaction evidence="1">
        <text>octanoyl-[ACP] + L-lysyl-[protein] = N(6)-octanoyl-L-lysyl-[protein] + holo-[ACP] + H(+)</text>
        <dbReference type="Rhea" id="RHEA:17665"/>
        <dbReference type="Rhea" id="RHEA-COMP:9636"/>
        <dbReference type="Rhea" id="RHEA-COMP:9685"/>
        <dbReference type="Rhea" id="RHEA-COMP:9752"/>
        <dbReference type="Rhea" id="RHEA-COMP:9928"/>
        <dbReference type="ChEBI" id="CHEBI:15378"/>
        <dbReference type="ChEBI" id="CHEBI:29969"/>
        <dbReference type="ChEBI" id="CHEBI:64479"/>
        <dbReference type="ChEBI" id="CHEBI:78463"/>
        <dbReference type="ChEBI" id="CHEBI:78809"/>
        <dbReference type="EC" id="2.3.1.181"/>
    </reaction>
</comment>
<comment type="pathway">
    <text evidence="1">Protein modification; protein lipoylation via endogenous pathway; protein N(6)-(lipoyl)lysine from octanoyl-[acyl-carrier-protein]: step 1/2.</text>
</comment>
<comment type="subcellular location">
    <subcellularLocation>
        <location evidence="1">Cytoplasm</location>
    </subcellularLocation>
</comment>
<comment type="miscellaneous">
    <text evidence="1">In the reaction, the free carboxyl group of octanoic acid is attached via an amide linkage to the epsilon-amino group of a specific lysine residue of lipoyl domains of lipoate-dependent enzymes.</text>
</comment>
<comment type="similarity">
    <text evidence="1">Belongs to the LipB family.</text>
</comment>
<protein>
    <recommendedName>
        <fullName evidence="1">Octanoyltransferase</fullName>
        <ecNumber evidence="1">2.3.1.181</ecNumber>
    </recommendedName>
    <alternativeName>
        <fullName evidence="1">Lipoate-protein ligase B</fullName>
    </alternativeName>
    <alternativeName>
        <fullName evidence="1">Lipoyl/octanoyl transferase</fullName>
    </alternativeName>
    <alternativeName>
        <fullName evidence="1">Octanoyl-[acyl-carrier-protein]-protein N-octanoyltransferase</fullName>
    </alternativeName>
</protein>
<evidence type="ECO:0000255" key="1">
    <source>
        <dbReference type="HAMAP-Rule" id="MF_00013"/>
    </source>
</evidence>
<evidence type="ECO:0000255" key="2">
    <source>
        <dbReference type="PROSITE-ProRule" id="PRU01067"/>
    </source>
</evidence>
<proteinExistence type="inferred from homology"/>
<keyword id="KW-0012">Acyltransferase</keyword>
<keyword id="KW-0963">Cytoplasm</keyword>
<keyword id="KW-0808">Transferase</keyword>
<feature type="chain" id="PRO_0000062872" description="Octanoyltransferase">
    <location>
        <begin position="1"/>
        <end position="245"/>
    </location>
</feature>
<feature type="domain" description="BPL/LPL catalytic" evidence="2">
    <location>
        <begin position="54"/>
        <end position="238"/>
    </location>
</feature>
<feature type="active site" description="Acyl-thioester intermediate" evidence="1">
    <location>
        <position position="198"/>
    </location>
</feature>
<feature type="binding site" evidence="1">
    <location>
        <begin position="92"/>
        <end position="99"/>
    </location>
    <ligand>
        <name>substrate</name>
    </ligand>
</feature>
<feature type="binding site" evidence="1">
    <location>
        <begin position="167"/>
        <end position="169"/>
    </location>
    <ligand>
        <name>substrate</name>
    </ligand>
</feature>
<feature type="binding site" evidence="1">
    <location>
        <begin position="180"/>
        <end position="182"/>
    </location>
    <ligand>
        <name>substrate</name>
    </ligand>
</feature>
<feature type="site" description="Lowers pKa of active site Cys" evidence="1">
    <location>
        <position position="164"/>
    </location>
</feature>
<dbReference type="EC" id="2.3.1.181" evidence="1"/>
<dbReference type="EMBL" id="BX572603">
    <property type="protein sequence ID" value="CAE28610.1"/>
    <property type="molecule type" value="Genomic_DNA"/>
</dbReference>
<dbReference type="RefSeq" id="WP_011158714.1">
    <property type="nucleotide sequence ID" value="NZ_CP116810.1"/>
</dbReference>
<dbReference type="SMR" id="Q6N514"/>
<dbReference type="STRING" id="258594.RPA3169"/>
<dbReference type="GeneID" id="66894253"/>
<dbReference type="eggNOG" id="COG0321">
    <property type="taxonomic scope" value="Bacteria"/>
</dbReference>
<dbReference type="HOGENOM" id="CLU_035168_3_0_5"/>
<dbReference type="PhylomeDB" id="Q6N514"/>
<dbReference type="UniPathway" id="UPA00538">
    <property type="reaction ID" value="UER00592"/>
</dbReference>
<dbReference type="GO" id="GO:0005737">
    <property type="term" value="C:cytoplasm"/>
    <property type="evidence" value="ECO:0007669"/>
    <property type="project" value="UniProtKB-SubCell"/>
</dbReference>
<dbReference type="GO" id="GO:0033819">
    <property type="term" value="F:lipoyl(octanoyl) transferase activity"/>
    <property type="evidence" value="ECO:0007669"/>
    <property type="project" value="UniProtKB-EC"/>
</dbReference>
<dbReference type="GO" id="GO:0036211">
    <property type="term" value="P:protein modification process"/>
    <property type="evidence" value="ECO:0007669"/>
    <property type="project" value="InterPro"/>
</dbReference>
<dbReference type="CDD" id="cd16444">
    <property type="entry name" value="LipB"/>
    <property type="match status" value="1"/>
</dbReference>
<dbReference type="FunFam" id="3.30.930.10:FF:000159">
    <property type="entry name" value="Octanoyltransferase"/>
    <property type="match status" value="1"/>
</dbReference>
<dbReference type="Gene3D" id="3.30.930.10">
    <property type="entry name" value="Bira Bifunctional Protein, Domain 2"/>
    <property type="match status" value="1"/>
</dbReference>
<dbReference type="HAMAP" id="MF_00013">
    <property type="entry name" value="LipB"/>
    <property type="match status" value="1"/>
</dbReference>
<dbReference type="InterPro" id="IPR045864">
    <property type="entry name" value="aa-tRNA-synth_II/BPL/LPL"/>
</dbReference>
<dbReference type="InterPro" id="IPR004143">
    <property type="entry name" value="BPL_LPL_catalytic"/>
</dbReference>
<dbReference type="InterPro" id="IPR000544">
    <property type="entry name" value="Octanoyltransferase"/>
</dbReference>
<dbReference type="InterPro" id="IPR020605">
    <property type="entry name" value="Octanoyltransferase_CS"/>
</dbReference>
<dbReference type="NCBIfam" id="TIGR00214">
    <property type="entry name" value="lipB"/>
    <property type="match status" value="1"/>
</dbReference>
<dbReference type="NCBIfam" id="NF010921">
    <property type="entry name" value="PRK14341.1"/>
    <property type="match status" value="1"/>
</dbReference>
<dbReference type="NCBIfam" id="NF010925">
    <property type="entry name" value="PRK14345.1"/>
    <property type="match status" value="1"/>
</dbReference>
<dbReference type="PANTHER" id="PTHR10993:SF7">
    <property type="entry name" value="LIPOYLTRANSFERASE 2, MITOCHONDRIAL-RELATED"/>
    <property type="match status" value="1"/>
</dbReference>
<dbReference type="PANTHER" id="PTHR10993">
    <property type="entry name" value="OCTANOYLTRANSFERASE"/>
    <property type="match status" value="1"/>
</dbReference>
<dbReference type="Pfam" id="PF21948">
    <property type="entry name" value="LplA-B_cat"/>
    <property type="match status" value="1"/>
</dbReference>
<dbReference type="PIRSF" id="PIRSF016262">
    <property type="entry name" value="LPLase"/>
    <property type="match status" value="1"/>
</dbReference>
<dbReference type="SUPFAM" id="SSF55681">
    <property type="entry name" value="Class II aaRS and biotin synthetases"/>
    <property type="match status" value="1"/>
</dbReference>
<dbReference type="PROSITE" id="PS51733">
    <property type="entry name" value="BPL_LPL_CATALYTIC"/>
    <property type="match status" value="1"/>
</dbReference>
<dbReference type="PROSITE" id="PS01313">
    <property type="entry name" value="LIPB"/>
    <property type="match status" value="1"/>
</dbReference>
<name>LIPB_RHOPA</name>
<sequence>MINISTSPRQTLDWTALKPADGSPAVEWRISDSPVPYPEAVATMEARAAAIAAGEATELVWLLEHPPLYTAGTSGHASDLLEERFPLFTTGRGGQLTYHGPGQRVAYVMLDLKRRRPDVRAYVAALEQWIIATLDAFNIRGERREDRVGVWVRRPDKGVGYEDKIAAIGVRLKRWVSLHGIAINVEPDLSHFKAIVPCGISDPRYGVTSLVDLGLPVVMTDVDIALRAAFENIFGETRAAAPAGI</sequence>
<accession>Q6N514</accession>